<accession>B4SJX6</accession>
<dbReference type="EC" id="6.3.2.8" evidence="1"/>
<dbReference type="EMBL" id="CP001111">
    <property type="protein sequence ID" value="ACF50308.1"/>
    <property type="molecule type" value="Genomic_DNA"/>
</dbReference>
<dbReference type="RefSeq" id="WP_012510048.1">
    <property type="nucleotide sequence ID" value="NC_011071.1"/>
</dbReference>
<dbReference type="SMR" id="B4SJX6"/>
<dbReference type="STRING" id="391008.Smal_0603"/>
<dbReference type="KEGG" id="smt:Smal_0603"/>
<dbReference type="eggNOG" id="COG0773">
    <property type="taxonomic scope" value="Bacteria"/>
</dbReference>
<dbReference type="HOGENOM" id="CLU_028104_2_2_6"/>
<dbReference type="OrthoDB" id="9804126at2"/>
<dbReference type="UniPathway" id="UPA00219"/>
<dbReference type="Proteomes" id="UP000001867">
    <property type="component" value="Chromosome"/>
</dbReference>
<dbReference type="GO" id="GO:0005737">
    <property type="term" value="C:cytoplasm"/>
    <property type="evidence" value="ECO:0007669"/>
    <property type="project" value="UniProtKB-SubCell"/>
</dbReference>
<dbReference type="GO" id="GO:0005524">
    <property type="term" value="F:ATP binding"/>
    <property type="evidence" value="ECO:0007669"/>
    <property type="project" value="UniProtKB-UniRule"/>
</dbReference>
<dbReference type="GO" id="GO:0008763">
    <property type="term" value="F:UDP-N-acetylmuramate-L-alanine ligase activity"/>
    <property type="evidence" value="ECO:0007669"/>
    <property type="project" value="UniProtKB-UniRule"/>
</dbReference>
<dbReference type="GO" id="GO:0051301">
    <property type="term" value="P:cell division"/>
    <property type="evidence" value="ECO:0007669"/>
    <property type="project" value="UniProtKB-KW"/>
</dbReference>
<dbReference type="GO" id="GO:0071555">
    <property type="term" value="P:cell wall organization"/>
    <property type="evidence" value="ECO:0007669"/>
    <property type="project" value="UniProtKB-KW"/>
</dbReference>
<dbReference type="GO" id="GO:0009252">
    <property type="term" value="P:peptidoglycan biosynthetic process"/>
    <property type="evidence" value="ECO:0007669"/>
    <property type="project" value="UniProtKB-UniRule"/>
</dbReference>
<dbReference type="GO" id="GO:0008360">
    <property type="term" value="P:regulation of cell shape"/>
    <property type="evidence" value="ECO:0007669"/>
    <property type="project" value="UniProtKB-KW"/>
</dbReference>
<dbReference type="Gene3D" id="3.90.190.20">
    <property type="entry name" value="Mur ligase, C-terminal domain"/>
    <property type="match status" value="1"/>
</dbReference>
<dbReference type="Gene3D" id="3.40.1190.10">
    <property type="entry name" value="Mur-like, catalytic domain"/>
    <property type="match status" value="1"/>
</dbReference>
<dbReference type="Gene3D" id="3.40.50.720">
    <property type="entry name" value="NAD(P)-binding Rossmann-like Domain"/>
    <property type="match status" value="1"/>
</dbReference>
<dbReference type="HAMAP" id="MF_00046">
    <property type="entry name" value="MurC"/>
    <property type="match status" value="1"/>
</dbReference>
<dbReference type="InterPro" id="IPR036565">
    <property type="entry name" value="Mur-like_cat_sf"/>
</dbReference>
<dbReference type="InterPro" id="IPR004101">
    <property type="entry name" value="Mur_ligase_C"/>
</dbReference>
<dbReference type="InterPro" id="IPR036615">
    <property type="entry name" value="Mur_ligase_C_dom_sf"/>
</dbReference>
<dbReference type="InterPro" id="IPR013221">
    <property type="entry name" value="Mur_ligase_cen"/>
</dbReference>
<dbReference type="InterPro" id="IPR000713">
    <property type="entry name" value="Mur_ligase_N"/>
</dbReference>
<dbReference type="InterPro" id="IPR050061">
    <property type="entry name" value="MurCDEF_pg_biosynth"/>
</dbReference>
<dbReference type="InterPro" id="IPR005758">
    <property type="entry name" value="UDP-N-AcMur_Ala_ligase_MurC"/>
</dbReference>
<dbReference type="NCBIfam" id="TIGR01082">
    <property type="entry name" value="murC"/>
    <property type="match status" value="1"/>
</dbReference>
<dbReference type="PANTHER" id="PTHR43445:SF3">
    <property type="entry name" value="UDP-N-ACETYLMURAMATE--L-ALANINE LIGASE"/>
    <property type="match status" value="1"/>
</dbReference>
<dbReference type="PANTHER" id="PTHR43445">
    <property type="entry name" value="UDP-N-ACETYLMURAMATE--L-ALANINE LIGASE-RELATED"/>
    <property type="match status" value="1"/>
</dbReference>
<dbReference type="Pfam" id="PF01225">
    <property type="entry name" value="Mur_ligase"/>
    <property type="match status" value="1"/>
</dbReference>
<dbReference type="Pfam" id="PF02875">
    <property type="entry name" value="Mur_ligase_C"/>
    <property type="match status" value="1"/>
</dbReference>
<dbReference type="Pfam" id="PF08245">
    <property type="entry name" value="Mur_ligase_M"/>
    <property type="match status" value="1"/>
</dbReference>
<dbReference type="SUPFAM" id="SSF51984">
    <property type="entry name" value="MurCD N-terminal domain"/>
    <property type="match status" value="1"/>
</dbReference>
<dbReference type="SUPFAM" id="SSF53623">
    <property type="entry name" value="MurD-like peptide ligases, catalytic domain"/>
    <property type="match status" value="1"/>
</dbReference>
<dbReference type="SUPFAM" id="SSF53244">
    <property type="entry name" value="MurD-like peptide ligases, peptide-binding domain"/>
    <property type="match status" value="1"/>
</dbReference>
<gene>
    <name evidence="1" type="primary">murC</name>
    <name type="ordered locus">Smal_0603</name>
</gene>
<comment type="function">
    <text evidence="1">Cell wall formation.</text>
</comment>
<comment type="catalytic activity">
    <reaction evidence="1">
        <text>UDP-N-acetyl-alpha-D-muramate + L-alanine + ATP = UDP-N-acetyl-alpha-D-muramoyl-L-alanine + ADP + phosphate + H(+)</text>
        <dbReference type="Rhea" id="RHEA:23372"/>
        <dbReference type="ChEBI" id="CHEBI:15378"/>
        <dbReference type="ChEBI" id="CHEBI:30616"/>
        <dbReference type="ChEBI" id="CHEBI:43474"/>
        <dbReference type="ChEBI" id="CHEBI:57972"/>
        <dbReference type="ChEBI" id="CHEBI:70757"/>
        <dbReference type="ChEBI" id="CHEBI:83898"/>
        <dbReference type="ChEBI" id="CHEBI:456216"/>
        <dbReference type="EC" id="6.3.2.8"/>
    </reaction>
</comment>
<comment type="pathway">
    <text evidence="1">Cell wall biogenesis; peptidoglycan biosynthesis.</text>
</comment>
<comment type="subcellular location">
    <subcellularLocation>
        <location evidence="1">Cytoplasm</location>
    </subcellularLocation>
</comment>
<comment type="similarity">
    <text evidence="1">Belongs to the MurCDEF family.</text>
</comment>
<keyword id="KW-0067">ATP-binding</keyword>
<keyword id="KW-0131">Cell cycle</keyword>
<keyword id="KW-0132">Cell division</keyword>
<keyword id="KW-0133">Cell shape</keyword>
<keyword id="KW-0961">Cell wall biogenesis/degradation</keyword>
<keyword id="KW-0963">Cytoplasm</keyword>
<keyword id="KW-0436">Ligase</keyword>
<keyword id="KW-0547">Nucleotide-binding</keyword>
<keyword id="KW-0573">Peptidoglycan synthesis</keyword>
<sequence length="478" mass="50547">MIRRLHDTNDLVRAFPRVHFVGIGGTGMSGIAEVMLTLGYEVSGSDNADNVATRRLASLGARIMRGHSAANVLGTDCVVVSSAIREDNPELMEARSQRIPIMPRAAMLAELMRFRRGIAVAGTHGKTTTTSLTAAVLSEGGLDPTFVIGGQLLAAGANAKLGGGQWLVAEADESDGSFLRLNPLMSIITNIDADHLENYGNDFARVQAAFAEFLQRLPFYGLAVLCIDDPEVAALAAKTPRHVMSYGMSPQADVRAENVVQEGSRMRFTLRLPQGTSQEVVLALPGKHNVLNALAAAAVGWQLGVAPDAIARALEGFAGVGRRFNDLGEVTTASGAKVRIIDDYGHHPSELEAVFAAARGGWADKRLVVAFQPHRYSRTRDQFDKFAAVLSSVDALVLSEVYPAGEEPIAGADSHALARAIRARGRSEPVVVGKAAELASVLPDVLQDGDLLLMMGAGDIGAVATHIAVEGFKGEGEA</sequence>
<evidence type="ECO:0000255" key="1">
    <source>
        <dbReference type="HAMAP-Rule" id="MF_00046"/>
    </source>
</evidence>
<feature type="chain" id="PRO_1000091140" description="UDP-N-acetylmuramate--L-alanine ligase">
    <location>
        <begin position="1"/>
        <end position="478"/>
    </location>
</feature>
<feature type="binding site" evidence="1">
    <location>
        <begin position="122"/>
        <end position="128"/>
    </location>
    <ligand>
        <name>ATP</name>
        <dbReference type="ChEBI" id="CHEBI:30616"/>
    </ligand>
</feature>
<reference key="1">
    <citation type="submission" date="2008-06" db="EMBL/GenBank/DDBJ databases">
        <title>Complete sequence of Stenotrophomonas maltophilia R551-3.</title>
        <authorList>
            <consortium name="US DOE Joint Genome Institute"/>
            <person name="Lucas S."/>
            <person name="Copeland A."/>
            <person name="Lapidus A."/>
            <person name="Glavina del Rio T."/>
            <person name="Dalin E."/>
            <person name="Tice H."/>
            <person name="Pitluck S."/>
            <person name="Chain P."/>
            <person name="Malfatti S."/>
            <person name="Shin M."/>
            <person name="Vergez L."/>
            <person name="Lang D."/>
            <person name="Schmutz J."/>
            <person name="Larimer F."/>
            <person name="Land M."/>
            <person name="Hauser L."/>
            <person name="Kyrpides N."/>
            <person name="Mikhailova N."/>
            <person name="Taghavi S."/>
            <person name="Monchy S."/>
            <person name="Newman L."/>
            <person name="Vangronsveld J."/>
            <person name="van der Lelie D."/>
            <person name="Richardson P."/>
        </authorList>
    </citation>
    <scope>NUCLEOTIDE SEQUENCE [LARGE SCALE GENOMIC DNA]</scope>
    <source>
        <strain>R551-3</strain>
    </source>
</reference>
<name>MURC_STRM5</name>
<proteinExistence type="inferred from homology"/>
<protein>
    <recommendedName>
        <fullName evidence="1">UDP-N-acetylmuramate--L-alanine ligase</fullName>
        <ecNumber evidence="1">6.3.2.8</ecNumber>
    </recommendedName>
    <alternativeName>
        <fullName evidence="1">UDP-N-acetylmuramoyl-L-alanine synthetase</fullName>
    </alternativeName>
</protein>
<organism>
    <name type="scientific">Stenotrophomonas maltophilia (strain R551-3)</name>
    <dbReference type="NCBI Taxonomy" id="391008"/>
    <lineage>
        <taxon>Bacteria</taxon>
        <taxon>Pseudomonadati</taxon>
        <taxon>Pseudomonadota</taxon>
        <taxon>Gammaproteobacteria</taxon>
        <taxon>Lysobacterales</taxon>
        <taxon>Lysobacteraceae</taxon>
        <taxon>Stenotrophomonas</taxon>
        <taxon>Stenotrophomonas maltophilia group</taxon>
    </lineage>
</organism>